<keyword id="KW-1185">Reference proteome</keyword>
<keyword id="KW-0687">Ribonucleoprotein</keyword>
<keyword id="KW-0689">Ribosomal protein</keyword>
<keyword id="KW-0694">RNA-binding</keyword>
<keyword id="KW-0699">rRNA-binding</keyword>
<organism>
    <name type="scientific">Photorhabdus laumondii subsp. laumondii (strain DSM 15139 / CIP 105565 / TT01)</name>
    <name type="common">Photorhabdus luminescens subsp. laumondii</name>
    <dbReference type="NCBI Taxonomy" id="243265"/>
    <lineage>
        <taxon>Bacteria</taxon>
        <taxon>Pseudomonadati</taxon>
        <taxon>Pseudomonadota</taxon>
        <taxon>Gammaproteobacteria</taxon>
        <taxon>Enterobacterales</taxon>
        <taxon>Morganellaceae</taxon>
        <taxon>Photorhabdus</taxon>
    </lineage>
</organism>
<feature type="chain" id="PRO_0000129594" description="Large ribosomal subunit protein uL2">
    <location>
        <begin position="1"/>
        <end position="274"/>
    </location>
</feature>
<feature type="region of interest" description="Disordered" evidence="2">
    <location>
        <begin position="28"/>
        <end position="54"/>
    </location>
</feature>
<feature type="region of interest" description="Disordered" evidence="2">
    <location>
        <begin position="221"/>
        <end position="274"/>
    </location>
</feature>
<feature type="compositionally biased region" description="Polar residues" evidence="2">
    <location>
        <begin position="39"/>
        <end position="49"/>
    </location>
</feature>
<sequence length="274" mass="30106">MAIVKCKPTSPGRRHVVKVVNPELHKGKPYAPLLEKSSKTGGRNNNGRITTRHIGGGHKQHYRLIDFKRNKDGIPAVVERLEYDPNRSANIALVLYKDGERRYILAPKGLKAGDQIQSGVDASIKTGNALPMRNIPVGSTVHNVEMKPGKGGQLARSAGAYVQIVARDGSYVTLRLRSGEMRKVLSDCRATLGEVGNAEHMLRVLGKAGASRWRGIRPTVRGTAMNPVDHPHGGGEGRNFGKHPVTPWGVQTKGKKTRSNKRTDQFIVRRRTKK</sequence>
<comment type="function">
    <text evidence="1">One of the primary rRNA binding proteins. Required for association of the 30S and 50S subunits to form the 70S ribosome, for tRNA binding and peptide bond formation. It has been suggested to have peptidyltransferase activity; this is somewhat controversial. Makes several contacts with the 16S rRNA in the 70S ribosome.</text>
</comment>
<comment type="subunit">
    <text evidence="1">Part of the 50S ribosomal subunit. Forms a bridge to the 30S subunit in the 70S ribosome.</text>
</comment>
<comment type="similarity">
    <text evidence="1">Belongs to the universal ribosomal protein uL2 family.</text>
</comment>
<evidence type="ECO:0000255" key="1">
    <source>
        <dbReference type="HAMAP-Rule" id="MF_01320"/>
    </source>
</evidence>
<evidence type="ECO:0000256" key="2">
    <source>
        <dbReference type="SAM" id="MobiDB-lite"/>
    </source>
</evidence>
<evidence type="ECO:0000305" key="3"/>
<dbReference type="EMBL" id="BX571874">
    <property type="protein sequence ID" value="CAE17095.1"/>
    <property type="molecule type" value="Genomic_DNA"/>
</dbReference>
<dbReference type="RefSeq" id="WP_011148792.1">
    <property type="nucleotide sequence ID" value="NC_005126.1"/>
</dbReference>
<dbReference type="SMR" id="Q7MYF4"/>
<dbReference type="STRING" id="243265.plu4723"/>
<dbReference type="GeneID" id="48850948"/>
<dbReference type="KEGG" id="plu:plu4723"/>
<dbReference type="eggNOG" id="COG0090">
    <property type="taxonomic scope" value="Bacteria"/>
</dbReference>
<dbReference type="HOGENOM" id="CLU_036235_2_1_6"/>
<dbReference type="OrthoDB" id="9778722at2"/>
<dbReference type="Proteomes" id="UP000002514">
    <property type="component" value="Chromosome"/>
</dbReference>
<dbReference type="GO" id="GO:0015934">
    <property type="term" value="C:large ribosomal subunit"/>
    <property type="evidence" value="ECO:0007669"/>
    <property type="project" value="InterPro"/>
</dbReference>
<dbReference type="GO" id="GO:0019843">
    <property type="term" value="F:rRNA binding"/>
    <property type="evidence" value="ECO:0007669"/>
    <property type="project" value="UniProtKB-UniRule"/>
</dbReference>
<dbReference type="GO" id="GO:0003735">
    <property type="term" value="F:structural constituent of ribosome"/>
    <property type="evidence" value="ECO:0007669"/>
    <property type="project" value="InterPro"/>
</dbReference>
<dbReference type="GO" id="GO:0016740">
    <property type="term" value="F:transferase activity"/>
    <property type="evidence" value="ECO:0007669"/>
    <property type="project" value="InterPro"/>
</dbReference>
<dbReference type="GO" id="GO:0002181">
    <property type="term" value="P:cytoplasmic translation"/>
    <property type="evidence" value="ECO:0007669"/>
    <property type="project" value="TreeGrafter"/>
</dbReference>
<dbReference type="FunFam" id="2.30.30.30:FF:000001">
    <property type="entry name" value="50S ribosomal protein L2"/>
    <property type="match status" value="1"/>
</dbReference>
<dbReference type="FunFam" id="2.40.50.140:FF:000003">
    <property type="entry name" value="50S ribosomal protein L2"/>
    <property type="match status" value="1"/>
</dbReference>
<dbReference type="FunFam" id="4.10.950.10:FF:000001">
    <property type="entry name" value="50S ribosomal protein L2"/>
    <property type="match status" value="1"/>
</dbReference>
<dbReference type="Gene3D" id="2.30.30.30">
    <property type="match status" value="1"/>
</dbReference>
<dbReference type="Gene3D" id="2.40.50.140">
    <property type="entry name" value="Nucleic acid-binding proteins"/>
    <property type="match status" value="1"/>
</dbReference>
<dbReference type="Gene3D" id="4.10.950.10">
    <property type="entry name" value="Ribosomal protein L2, domain 3"/>
    <property type="match status" value="1"/>
</dbReference>
<dbReference type="HAMAP" id="MF_01320_B">
    <property type="entry name" value="Ribosomal_uL2_B"/>
    <property type="match status" value="1"/>
</dbReference>
<dbReference type="InterPro" id="IPR012340">
    <property type="entry name" value="NA-bd_OB-fold"/>
</dbReference>
<dbReference type="InterPro" id="IPR014722">
    <property type="entry name" value="Rib_uL2_dom2"/>
</dbReference>
<dbReference type="InterPro" id="IPR002171">
    <property type="entry name" value="Ribosomal_uL2"/>
</dbReference>
<dbReference type="InterPro" id="IPR005880">
    <property type="entry name" value="Ribosomal_uL2_bac/org-type"/>
</dbReference>
<dbReference type="InterPro" id="IPR022669">
    <property type="entry name" value="Ribosomal_uL2_C"/>
</dbReference>
<dbReference type="InterPro" id="IPR022671">
    <property type="entry name" value="Ribosomal_uL2_CS"/>
</dbReference>
<dbReference type="InterPro" id="IPR014726">
    <property type="entry name" value="Ribosomal_uL2_dom3"/>
</dbReference>
<dbReference type="InterPro" id="IPR022666">
    <property type="entry name" value="Ribosomal_uL2_RNA-bd_dom"/>
</dbReference>
<dbReference type="InterPro" id="IPR008991">
    <property type="entry name" value="Translation_prot_SH3-like_sf"/>
</dbReference>
<dbReference type="NCBIfam" id="TIGR01171">
    <property type="entry name" value="rplB_bact"/>
    <property type="match status" value="1"/>
</dbReference>
<dbReference type="PANTHER" id="PTHR13691:SF5">
    <property type="entry name" value="LARGE RIBOSOMAL SUBUNIT PROTEIN UL2M"/>
    <property type="match status" value="1"/>
</dbReference>
<dbReference type="PANTHER" id="PTHR13691">
    <property type="entry name" value="RIBOSOMAL PROTEIN L2"/>
    <property type="match status" value="1"/>
</dbReference>
<dbReference type="Pfam" id="PF00181">
    <property type="entry name" value="Ribosomal_L2"/>
    <property type="match status" value="1"/>
</dbReference>
<dbReference type="Pfam" id="PF03947">
    <property type="entry name" value="Ribosomal_L2_C"/>
    <property type="match status" value="1"/>
</dbReference>
<dbReference type="PIRSF" id="PIRSF002158">
    <property type="entry name" value="Ribosomal_L2"/>
    <property type="match status" value="1"/>
</dbReference>
<dbReference type="SMART" id="SM01383">
    <property type="entry name" value="Ribosomal_L2"/>
    <property type="match status" value="1"/>
</dbReference>
<dbReference type="SMART" id="SM01382">
    <property type="entry name" value="Ribosomal_L2_C"/>
    <property type="match status" value="1"/>
</dbReference>
<dbReference type="SUPFAM" id="SSF50249">
    <property type="entry name" value="Nucleic acid-binding proteins"/>
    <property type="match status" value="1"/>
</dbReference>
<dbReference type="SUPFAM" id="SSF50104">
    <property type="entry name" value="Translation proteins SH3-like domain"/>
    <property type="match status" value="1"/>
</dbReference>
<dbReference type="PROSITE" id="PS00467">
    <property type="entry name" value="RIBOSOMAL_L2"/>
    <property type="match status" value="1"/>
</dbReference>
<accession>Q7MYF4</accession>
<reference key="1">
    <citation type="journal article" date="2003" name="Nat. Biotechnol.">
        <title>The genome sequence of the entomopathogenic bacterium Photorhabdus luminescens.</title>
        <authorList>
            <person name="Duchaud E."/>
            <person name="Rusniok C."/>
            <person name="Frangeul L."/>
            <person name="Buchrieser C."/>
            <person name="Givaudan A."/>
            <person name="Taourit S."/>
            <person name="Bocs S."/>
            <person name="Boursaux-Eude C."/>
            <person name="Chandler M."/>
            <person name="Charles J.-F."/>
            <person name="Dassa E."/>
            <person name="Derose R."/>
            <person name="Derzelle S."/>
            <person name="Freyssinet G."/>
            <person name="Gaudriault S."/>
            <person name="Medigue C."/>
            <person name="Lanois A."/>
            <person name="Powell K."/>
            <person name="Siguier P."/>
            <person name="Vincent R."/>
            <person name="Wingate V."/>
            <person name="Zouine M."/>
            <person name="Glaser P."/>
            <person name="Boemare N."/>
            <person name="Danchin A."/>
            <person name="Kunst F."/>
        </authorList>
    </citation>
    <scope>NUCLEOTIDE SEQUENCE [LARGE SCALE GENOMIC DNA]</scope>
    <source>
        <strain>DSM 15139 / CIP 105565 / TT01</strain>
    </source>
</reference>
<protein>
    <recommendedName>
        <fullName evidence="1">Large ribosomal subunit protein uL2</fullName>
    </recommendedName>
    <alternativeName>
        <fullName evidence="3">50S ribosomal protein L2</fullName>
    </alternativeName>
</protein>
<proteinExistence type="inferred from homology"/>
<gene>
    <name evidence="1" type="primary">rplB</name>
    <name type="ordered locus">plu4723</name>
</gene>
<name>RL2_PHOLL</name>